<proteinExistence type="inferred from homology"/>
<organism>
    <name type="scientific">Neisseria lactamica</name>
    <dbReference type="NCBI Taxonomy" id="486"/>
    <lineage>
        <taxon>Bacteria</taxon>
        <taxon>Pseudomonadati</taxon>
        <taxon>Pseudomonadota</taxon>
        <taxon>Betaproteobacteria</taxon>
        <taxon>Neisseriales</taxon>
        <taxon>Neisseriaceae</taxon>
        <taxon>Neisseria</taxon>
    </lineage>
</organism>
<gene>
    <name type="primary">nlaIIIM</name>
</gene>
<comment type="function">
    <text evidence="1 2">A methylase, recognizes the double-stranded sequence 5'-CATG-3', methylates A-2 on both strands and protects the DNA from cleavage by the NlaIII endonuclease.</text>
</comment>
<comment type="catalytic activity">
    <reaction>
        <text>a 2'-deoxyadenosine in DNA + S-adenosyl-L-methionine = an N(6)-methyl-2'-deoxyadenosine in DNA + S-adenosyl-L-homocysteine + H(+)</text>
        <dbReference type="Rhea" id="RHEA:15197"/>
        <dbReference type="Rhea" id="RHEA-COMP:12418"/>
        <dbReference type="Rhea" id="RHEA-COMP:12419"/>
        <dbReference type="ChEBI" id="CHEBI:15378"/>
        <dbReference type="ChEBI" id="CHEBI:57856"/>
        <dbReference type="ChEBI" id="CHEBI:59789"/>
        <dbReference type="ChEBI" id="CHEBI:90615"/>
        <dbReference type="ChEBI" id="CHEBI:90616"/>
        <dbReference type="EC" id="2.1.1.72"/>
    </reaction>
</comment>
<comment type="similarity">
    <text evidence="4">Belongs to the N(4)/N(6)-methyltransferase family.</text>
</comment>
<comment type="caution">
    <text evidence="5">It is uncertain whether Met-1 or Met-57 is the initiator.</text>
</comment>
<keyword id="KW-0238">DNA-binding</keyword>
<keyword id="KW-0489">Methyltransferase</keyword>
<keyword id="KW-0680">Restriction system</keyword>
<keyword id="KW-0949">S-adenosyl-L-methionine</keyword>
<keyword id="KW-0808">Transferase</keyword>
<reference key="1">
    <citation type="journal article" date="1990" name="Mol. Gen. Genet.">
        <title>Cloning and characterization of two tandemly arranged DNA methyltransferase genes of Neisseria lactamica: an adenine-specific M.NlaIII and a cytosine-type methylase.</title>
        <authorList>
            <person name="Labbe D."/>
            <person name="Hoeltke H.J."/>
            <person name="Lau P.C.K."/>
        </authorList>
    </citation>
    <scope>NUCLEOTIDE SEQUENCE [GENOMIC DNA]</scope>
    <scope>FUNCTION</scope>
    <source>
        <strain>ATCC 23970 / DSM 4691 / CCUG 5853 / CIP 72.17 / NCTC 10617 / NCDC A7515</strain>
    </source>
</reference>
<reference key="2">
    <citation type="journal article" date="2003" name="Nucleic Acids Res.">
        <title>A nomenclature for restriction enzymes, DNA methyltransferases, homing endonucleases and their genes.</title>
        <authorList>
            <person name="Roberts R.J."/>
            <person name="Belfort M."/>
            <person name="Bestor T."/>
            <person name="Bhagwat A.S."/>
            <person name="Bickle T.A."/>
            <person name="Bitinaite J."/>
            <person name="Blumenthal R.M."/>
            <person name="Degtyarev S.K."/>
            <person name="Dryden D.T."/>
            <person name="Dybvig K."/>
            <person name="Firman K."/>
            <person name="Gromova E.S."/>
            <person name="Gumport R.I."/>
            <person name="Halford S.E."/>
            <person name="Hattman S."/>
            <person name="Heitman J."/>
            <person name="Hornby D.P."/>
            <person name="Janulaitis A."/>
            <person name="Jeltsch A."/>
            <person name="Josephsen J."/>
            <person name="Kiss A."/>
            <person name="Klaenhammer T.R."/>
            <person name="Kobayashi I."/>
            <person name="Kong H."/>
            <person name="Krueger D.H."/>
            <person name="Lacks S."/>
            <person name="Marinus M.G."/>
            <person name="Miyahara M."/>
            <person name="Morgan R.D."/>
            <person name="Murray N.E."/>
            <person name="Nagaraja V."/>
            <person name="Piekarowicz A."/>
            <person name="Pingoud A."/>
            <person name="Raleigh E."/>
            <person name="Rao D.N."/>
            <person name="Reich N."/>
            <person name="Repin V.E."/>
            <person name="Selker E.U."/>
            <person name="Shaw P.C."/>
            <person name="Stein D.C."/>
            <person name="Stoddard B.L."/>
            <person name="Szybalski W."/>
            <person name="Trautner T.A."/>
            <person name="Van Etten J.L."/>
            <person name="Vitor J.M."/>
            <person name="Wilson G.G."/>
            <person name="Xu S.Y."/>
        </authorList>
    </citation>
    <scope>NOMENCLATURE</scope>
</reference>
<protein>
    <recommendedName>
        <fullName evidence="2">Type II methyltransferase M.NlaIII</fullName>
        <shortName evidence="3">M.NlaIII</shortName>
        <ecNumber>2.1.1.72</ecNumber>
    </recommendedName>
    <alternativeName>
        <fullName>Adenine-specific methyltransferase NlaIII</fullName>
    </alternativeName>
    <alternativeName>
        <fullName>Modification methylase NlaIII</fullName>
    </alternativeName>
</protein>
<evidence type="ECO:0000269" key="1">
    <source>
    </source>
</evidence>
<evidence type="ECO:0000303" key="2">
    <source>
    </source>
</evidence>
<evidence type="ECO:0000303" key="3">
    <source>
    </source>
</evidence>
<evidence type="ECO:0000305" key="4"/>
<evidence type="ECO:0000305" key="5">
    <source>
    </source>
</evidence>
<dbReference type="EC" id="2.1.1.72"/>
<dbReference type="EMBL" id="X54485">
    <property type="protein sequence ID" value="CAA38356.1"/>
    <property type="molecule type" value="Genomic_DNA"/>
</dbReference>
<dbReference type="PIR" id="S12036">
    <property type="entry name" value="XYNHAL"/>
</dbReference>
<dbReference type="RefSeq" id="WP_003709316.1">
    <property type="nucleotide sequence ID" value="NZ_LR590477.1"/>
</dbReference>
<dbReference type="STRING" id="486.B2G52_01555"/>
<dbReference type="PRO" id="PR:P24582"/>
<dbReference type="GO" id="GO:0003677">
    <property type="term" value="F:DNA binding"/>
    <property type="evidence" value="ECO:0007669"/>
    <property type="project" value="UniProtKB-KW"/>
</dbReference>
<dbReference type="GO" id="GO:0009007">
    <property type="term" value="F:site-specific DNA-methyltransferase (adenine-specific) activity"/>
    <property type="evidence" value="ECO:0007669"/>
    <property type="project" value="UniProtKB-EC"/>
</dbReference>
<dbReference type="GO" id="GO:0009307">
    <property type="term" value="P:DNA restriction-modification system"/>
    <property type="evidence" value="ECO:0007669"/>
    <property type="project" value="UniProtKB-KW"/>
</dbReference>
<dbReference type="GO" id="GO:0032259">
    <property type="term" value="P:methylation"/>
    <property type="evidence" value="ECO:0007669"/>
    <property type="project" value="UniProtKB-KW"/>
</dbReference>
<dbReference type="Gene3D" id="3.40.50.150">
    <property type="entry name" value="Vaccinia Virus protein VP39"/>
    <property type="match status" value="1"/>
</dbReference>
<dbReference type="InterPro" id="IPR002052">
    <property type="entry name" value="DNA_methylase_N6_adenine_CS"/>
</dbReference>
<dbReference type="InterPro" id="IPR012327">
    <property type="entry name" value="MeTrfase_D12"/>
</dbReference>
<dbReference type="InterPro" id="IPR029063">
    <property type="entry name" value="SAM-dependent_MTases_sf"/>
</dbReference>
<dbReference type="Pfam" id="PF02086">
    <property type="entry name" value="MethyltransfD12"/>
    <property type="match status" value="1"/>
</dbReference>
<dbReference type="PRINTS" id="PR00505">
    <property type="entry name" value="D12N6MTFRASE"/>
</dbReference>
<dbReference type="SUPFAM" id="SSF53335">
    <property type="entry name" value="S-adenosyl-L-methionine-dependent methyltransferases"/>
    <property type="match status" value="1"/>
</dbReference>
<dbReference type="PROSITE" id="PS00092">
    <property type="entry name" value="N6_MTASE"/>
    <property type="match status" value="1"/>
</dbReference>
<accession>P24582</accession>
<sequence>MNYIGSKLKLSNWLETEISNVAGHSLSDKVFCDLFAGTGIVGRKFKTNVKQVIANDMEYYSYVLNRNYIGNCQSILKAGELLQRLEQLPPREGLIYQHYCLGSGSERQYFSDENGKKIDAVRIQIEEWKNTRYIDEDTYYFLLATLLEGADKVANTASVYGAFLKNLKKSALKPLSLEPALFEIGSDGHQVYQADANQLIKNISGDILYLDPPYNARQYGANYHLLNSIALYDDFTPKGKTGLREYSRSKYCSKSDVVPVFEALIRDADFQYIFLSYNNEGLMSVGQVREIFERFGKYDLVQTEYRRFKADKTENRNHKANSTFEYLHILEKTF</sequence>
<feature type="chain" id="PRO_0000087968" description="Type II methyltransferase M.NlaIII">
    <location>
        <begin position="1"/>
        <end position="334"/>
    </location>
</feature>
<name>MTN3_NEILA</name>